<comment type="similarity">
    <text evidence="1">Belongs to the bacilliredoxin family.</text>
</comment>
<protein>
    <recommendedName>
        <fullName evidence="1">Bacilliredoxin SAV1428</fullName>
    </recommendedName>
</protein>
<accession>Q99U60</accession>
<evidence type="ECO:0000305" key="1"/>
<sequence>MNAYDAYMKEIAQQMRGELTQNGFTSLETSEAVSEYMNQVNADDTTFVVINSTCGCAAGLARPAAVAVATQNEHRPTNTVTVFAGQDKEATATMREFIQQAPSSPSYALFKGQDLVYFMPREFIEGRDINDIAMDLKDAFDENCK</sequence>
<gene>
    <name type="ordered locus">SAV1428</name>
</gene>
<reference key="1">
    <citation type="journal article" date="2001" name="Lancet">
        <title>Whole genome sequencing of meticillin-resistant Staphylococcus aureus.</title>
        <authorList>
            <person name="Kuroda M."/>
            <person name="Ohta T."/>
            <person name="Uchiyama I."/>
            <person name="Baba T."/>
            <person name="Yuzawa H."/>
            <person name="Kobayashi I."/>
            <person name="Cui L."/>
            <person name="Oguchi A."/>
            <person name="Aoki K."/>
            <person name="Nagai Y."/>
            <person name="Lian J.-Q."/>
            <person name="Ito T."/>
            <person name="Kanamori M."/>
            <person name="Matsumaru H."/>
            <person name="Maruyama A."/>
            <person name="Murakami H."/>
            <person name="Hosoyama A."/>
            <person name="Mizutani-Ui Y."/>
            <person name="Takahashi N.K."/>
            <person name="Sawano T."/>
            <person name="Inoue R."/>
            <person name="Kaito C."/>
            <person name="Sekimizu K."/>
            <person name="Hirakawa H."/>
            <person name="Kuhara S."/>
            <person name="Goto S."/>
            <person name="Yabuzaki J."/>
            <person name="Kanehisa M."/>
            <person name="Yamashita A."/>
            <person name="Oshima K."/>
            <person name="Furuya K."/>
            <person name="Yoshino C."/>
            <person name="Shiba T."/>
            <person name="Hattori M."/>
            <person name="Ogasawara N."/>
            <person name="Hayashi H."/>
            <person name="Hiramatsu K."/>
        </authorList>
    </citation>
    <scope>NUCLEOTIDE SEQUENCE [LARGE SCALE GENOMIC DNA]</scope>
    <source>
        <strain>Mu50 / ATCC 700699</strain>
    </source>
</reference>
<feature type="chain" id="PRO_0000272003" description="Bacilliredoxin SAV1428">
    <location>
        <begin position="1"/>
        <end position="145"/>
    </location>
</feature>
<proteinExistence type="inferred from homology"/>
<name>Y1428_STAAM</name>
<dbReference type="EMBL" id="BA000017">
    <property type="protein sequence ID" value="BAB57590.1"/>
    <property type="molecule type" value="Genomic_DNA"/>
</dbReference>
<dbReference type="SMR" id="Q99U60"/>
<dbReference type="KEGG" id="sav:SAV1428"/>
<dbReference type="HOGENOM" id="CLU_132521_0_0_9"/>
<dbReference type="PhylomeDB" id="Q99U60"/>
<dbReference type="Proteomes" id="UP000002481">
    <property type="component" value="Chromosome"/>
</dbReference>
<dbReference type="GO" id="GO:0045454">
    <property type="term" value="P:cell redox homeostasis"/>
    <property type="evidence" value="ECO:0000250"/>
    <property type="project" value="UniProtKB"/>
</dbReference>
<dbReference type="Gene3D" id="3.40.30.10">
    <property type="entry name" value="Glutaredoxin"/>
    <property type="match status" value="1"/>
</dbReference>
<dbReference type="InterPro" id="IPR009474">
    <property type="entry name" value="BrxB/BrxA"/>
</dbReference>
<dbReference type="NCBIfam" id="TIGR04191">
    <property type="entry name" value="YphP_YqiW"/>
    <property type="match status" value="1"/>
</dbReference>
<dbReference type="PANTHER" id="PTHR40052:SF2">
    <property type="entry name" value="BACILLIREDOXIN BRXA"/>
    <property type="match status" value="1"/>
</dbReference>
<dbReference type="PANTHER" id="PTHR40052">
    <property type="entry name" value="UPF0403 PROTEIN YQIW-RELATED"/>
    <property type="match status" value="1"/>
</dbReference>
<dbReference type="Pfam" id="PF06491">
    <property type="entry name" value="Disulph_isomer"/>
    <property type="match status" value="1"/>
</dbReference>
<organism>
    <name type="scientific">Staphylococcus aureus (strain Mu50 / ATCC 700699)</name>
    <dbReference type="NCBI Taxonomy" id="158878"/>
    <lineage>
        <taxon>Bacteria</taxon>
        <taxon>Bacillati</taxon>
        <taxon>Bacillota</taxon>
        <taxon>Bacilli</taxon>
        <taxon>Bacillales</taxon>
        <taxon>Staphylococcaceae</taxon>
        <taxon>Staphylococcus</taxon>
    </lineage>
</organism>